<accession>Q4L9J7</accession>
<name>ARCR_STAHJ</name>
<proteinExistence type="inferred from homology"/>
<gene>
    <name type="primary">arcR</name>
    <name type="ordered locus">SH0369</name>
</gene>
<evidence type="ECO:0000250" key="1"/>
<protein>
    <recommendedName>
        <fullName>HTH-type transcriptional regulator ArcR</fullName>
    </recommendedName>
</protein>
<feature type="chain" id="PRO_0000349420" description="HTH-type transcriptional regulator ArcR">
    <location>
        <begin position="1"/>
        <end position="227"/>
    </location>
</feature>
<feature type="domain" description="HTH crp-type">
    <location>
        <begin position="156"/>
        <end position="227"/>
    </location>
</feature>
<feature type="DNA-binding region" description="H-T-H motif" evidence="1">
    <location>
        <begin position="189"/>
        <end position="208"/>
    </location>
</feature>
<feature type="binding site">
    <location>
        <begin position="41"/>
        <end position="130"/>
    </location>
    <ligand>
        <name>a nucleoside 3',5'-cyclic phosphate</name>
        <dbReference type="ChEBI" id="CHEBI:58464"/>
    </ligand>
</feature>
<keyword id="KW-0010">Activator</keyword>
<keyword id="KW-0114">cAMP</keyword>
<keyword id="KW-0116">cAMP-binding</keyword>
<keyword id="KW-0963">Cytoplasm</keyword>
<keyword id="KW-0238">DNA-binding</keyword>
<keyword id="KW-0547">Nucleotide-binding</keyword>
<keyword id="KW-0804">Transcription</keyword>
<keyword id="KW-0805">Transcription regulation</keyword>
<organism>
    <name type="scientific">Staphylococcus haemolyticus (strain JCSC1435)</name>
    <dbReference type="NCBI Taxonomy" id="279808"/>
    <lineage>
        <taxon>Bacteria</taxon>
        <taxon>Bacillati</taxon>
        <taxon>Bacillota</taxon>
        <taxon>Bacilli</taxon>
        <taxon>Bacillales</taxon>
        <taxon>Staphylococcaceae</taxon>
        <taxon>Staphylococcus</taxon>
    </lineage>
</organism>
<dbReference type="EMBL" id="AP006716">
    <property type="protein sequence ID" value="BAE03678.1"/>
    <property type="molecule type" value="Genomic_DNA"/>
</dbReference>
<dbReference type="RefSeq" id="WP_011274695.1">
    <property type="nucleotide sequence ID" value="NC_007168.1"/>
</dbReference>
<dbReference type="SMR" id="Q4L9J7"/>
<dbReference type="KEGG" id="sha:SH0369"/>
<dbReference type="eggNOG" id="COG0664">
    <property type="taxonomic scope" value="Bacteria"/>
</dbReference>
<dbReference type="HOGENOM" id="CLU_1160528_0_0_9"/>
<dbReference type="OrthoDB" id="2397993at2"/>
<dbReference type="Proteomes" id="UP000000543">
    <property type="component" value="Chromosome"/>
</dbReference>
<dbReference type="GO" id="GO:0005829">
    <property type="term" value="C:cytosol"/>
    <property type="evidence" value="ECO:0007669"/>
    <property type="project" value="TreeGrafter"/>
</dbReference>
<dbReference type="GO" id="GO:0030552">
    <property type="term" value="F:cAMP binding"/>
    <property type="evidence" value="ECO:0007669"/>
    <property type="project" value="UniProtKB-KW"/>
</dbReference>
<dbReference type="GO" id="GO:0003677">
    <property type="term" value="F:DNA binding"/>
    <property type="evidence" value="ECO:0007669"/>
    <property type="project" value="UniProtKB-KW"/>
</dbReference>
<dbReference type="GO" id="GO:0003700">
    <property type="term" value="F:DNA-binding transcription factor activity"/>
    <property type="evidence" value="ECO:0007669"/>
    <property type="project" value="TreeGrafter"/>
</dbReference>
<dbReference type="CDD" id="cd00038">
    <property type="entry name" value="CAP_ED"/>
    <property type="match status" value="1"/>
</dbReference>
<dbReference type="Gene3D" id="2.60.120.10">
    <property type="entry name" value="Jelly Rolls"/>
    <property type="match status" value="1"/>
</dbReference>
<dbReference type="Gene3D" id="1.10.10.10">
    <property type="entry name" value="Winged helix-like DNA-binding domain superfamily/Winged helix DNA-binding domain"/>
    <property type="match status" value="1"/>
</dbReference>
<dbReference type="InterPro" id="IPR000595">
    <property type="entry name" value="cNMP-bd_dom"/>
</dbReference>
<dbReference type="InterPro" id="IPR018490">
    <property type="entry name" value="cNMP-bd_dom_sf"/>
</dbReference>
<dbReference type="InterPro" id="IPR050397">
    <property type="entry name" value="Env_Response_Regulators"/>
</dbReference>
<dbReference type="InterPro" id="IPR014710">
    <property type="entry name" value="RmlC-like_jellyroll"/>
</dbReference>
<dbReference type="InterPro" id="IPR036388">
    <property type="entry name" value="WH-like_DNA-bd_sf"/>
</dbReference>
<dbReference type="InterPro" id="IPR036390">
    <property type="entry name" value="WH_DNA-bd_sf"/>
</dbReference>
<dbReference type="PANTHER" id="PTHR24567">
    <property type="entry name" value="CRP FAMILY TRANSCRIPTIONAL REGULATORY PROTEIN"/>
    <property type="match status" value="1"/>
</dbReference>
<dbReference type="PANTHER" id="PTHR24567:SF74">
    <property type="entry name" value="HTH-TYPE TRANSCRIPTIONAL REGULATOR ARCR"/>
    <property type="match status" value="1"/>
</dbReference>
<dbReference type="Pfam" id="PF00027">
    <property type="entry name" value="cNMP_binding"/>
    <property type="match status" value="1"/>
</dbReference>
<dbReference type="SUPFAM" id="SSF51206">
    <property type="entry name" value="cAMP-binding domain-like"/>
    <property type="match status" value="1"/>
</dbReference>
<dbReference type="SUPFAM" id="SSF46785">
    <property type="entry name" value="Winged helix' DNA-binding domain"/>
    <property type="match status" value="1"/>
</dbReference>
<comment type="function">
    <text evidence="1">Positively regulates the expression of the arcABDCR operon under anaerobic conditions, thus playing an essential role in arginine catabolism. May also control the expression of genes encoding proteins which are involved in anaerobic metabolism. Can bind cyclic AMP (By similarity).</text>
</comment>
<comment type="subcellular location">
    <subcellularLocation>
        <location evidence="1">Cytoplasm</location>
    </subcellularLocation>
</comment>
<reference key="1">
    <citation type="journal article" date="2005" name="J. Bacteriol.">
        <title>Whole-genome sequencing of Staphylococcus haemolyticus uncovers the extreme plasticity of its genome and the evolution of human-colonizing staphylococcal species.</title>
        <authorList>
            <person name="Takeuchi F."/>
            <person name="Watanabe S."/>
            <person name="Baba T."/>
            <person name="Yuzawa H."/>
            <person name="Ito T."/>
            <person name="Morimoto Y."/>
            <person name="Kuroda M."/>
            <person name="Cui L."/>
            <person name="Takahashi M."/>
            <person name="Ankai A."/>
            <person name="Baba S."/>
            <person name="Fukui S."/>
            <person name="Lee J.C."/>
            <person name="Hiramatsu K."/>
        </authorList>
    </citation>
    <scope>NUCLEOTIDE SEQUENCE [LARGE SCALE GENOMIC DNA]</scope>
    <source>
        <strain>JCSC1435</strain>
    </source>
</reference>
<sequence>MAGKTYINNRDNDLSEGLKQLASYLNIPTGVIQAFKSECFVRRYNKGQIIYYSSDQPTYVYLLLDGIVLRETINEDGDAYRKLNKEQLLFPLNHLFRKIELNEMCTAITPCNVIGIPKDMLEYLCKNHDDIFVTLFEKLNNELELLMEYNMALTTKLARERIEKVLYYLCHAIGYDQDEFYEIKHIMTIQLLSDLAGISRETTGHIVHELKEEKKLIKNGKNWMVIK</sequence>